<proteinExistence type="evidence at protein level"/>
<organismHost>
    <name type="scientific">Homo sapiens</name>
    <name type="common">Human</name>
    <dbReference type="NCBI Taxonomy" id="9606"/>
</organismHost>
<feature type="chain" id="PRO_0000394720" description="Protein C">
    <location>
        <begin position="1"/>
        <end position="186"/>
    </location>
</feature>
<feature type="region of interest" description="Disordered" evidence="1">
    <location>
        <begin position="1"/>
        <end position="45"/>
    </location>
</feature>
<feature type="compositionally biased region" description="Polar residues" evidence="1">
    <location>
        <begin position="1"/>
        <end position="15"/>
    </location>
</feature>
<sequence length="186" mass="21106">MSKTDWNASGLSRPSPSAHWPSRKPWQHGQKYQTTQDRTEPPARKRRQAVRVSANHASQQLDQLKAVHLASAVRDLEKAMTTLKLWESPQEISRHQALGYSVIMFMITAVKRLRESKMLTLSWFNQALMVIAPSQEETMNLKTAMWILANLIPRDMLSLTGDLLPSLWGSGLLMLKLQKEGRSTSS</sequence>
<dbReference type="EMBL" id="AB016162">
    <property type="protein sequence ID" value="BAA34979.1"/>
    <property type="molecule type" value="Genomic_RNA"/>
</dbReference>
<dbReference type="RefSeq" id="NP_056920.1">
    <property type="nucleotide sequence ID" value="NC_001498.1"/>
</dbReference>
<dbReference type="GeneID" id="1489805"/>
<dbReference type="KEGG" id="ag:NP_056920"/>
<dbReference type="Proteomes" id="UP000008699">
    <property type="component" value="Segment"/>
</dbReference>
<dbReference type="GO" id="GO:0044161">
    <property type="term" value="C:host cell cytoplasmic vesicle"/>
    <property type="evidence" value="ECO:0007669"/>
    <property type="project" value="UniProtKB-SubCell"/>
</dbReference>
<dbReference type="GO" id="GO:0042025">
    <property type="term" value="C:host cell nucleus"/>
    <property type="evidence" value="ECO:0007669"/>
    <property type="project" value="UniProtKB-SubCell"/>
</dbReference>
<dbReference type="GO" id="GO:0075071">
    <property type="term" value="P:symbiont-mediated perturbation of host autophagy"/>
    <property type="evidence" value="ECO:0000269"/>
    <property type="project" value="SigSci"/>
</dbReference>
<dbReference type="InterPro" id="IPR003875">
    <property type="entry name" value="Paramyxovir_NSC"/>
</dbReference>
<dbReference type="Pfam" id="PF02725">
    <property type="entry name" value="Paramyxo_NS_C"/>
    <property type="match status" value="1"/>
</dbReference>
<protein>
    <recommendedName>
        <fullName>Protein C</fullName>
    </recommendedName>
</protein>
<name>C_MEASC</name>
<reference key="1">
    <citation type="journal article" date="2000" name="Virus Genes">
        <title>Comparative nucleotide sequence analyses of the entire genomes of B95a cell-isolated and vero cell-isolated measles viruses from the same patient.</title>
        <authorList>
            <person name="Takeuchi K."/>
            <person name="Miyajima N."/>
            <person name="Kobune F."/>
            <person name="Tashiro M."/>
        </authorList>
    </citation>
    <scope>NUCLEOTIDE SEQUENCE [GENOMIC RNA]</scope>
</reference>
<reference key="2">
    <citation type="journal article" date="2020" name="J. Virol.">
        <title>The C Protein Is Recruited to Measles Virus Ribonucleocapsids by the Phosphoprotein.</title>
        <authorList>
            <person name="Pfaller C.K."/>
            <person name="Bloyet L.M."/>
            <person name="Donohue R.C."/>
            <person name="Huff A.L."/>
            <person name="Bartemes W.P."/>
            <person name="Yousaf I."/>
            <person name="Urzua E."/>
            <person name="Claviere M."/>
            <person name="Zachary M."/>
            <person name="de Masson d'Autume V."/>
            <person name="Carson S."/>
            <person name="Schieferecke A.J."/>
            <person name="Meyer A.J."/>
            <person name="Gerlier D."/>
            <person name="Cattaneo R."/>
        </authorList>
    </citation>
    <scope>FUNCTION</scope>
    <scope>INTERACTION WITH THE PHOSPHOPROTEIN</scope>
    <scope>SUBCELLULAR LOCATION</scope>
    <source>
        <strain>Recombiant vac2-2tags</strain>
    </source>
</reference>
<organism>
    <name type="scientific">Measles virus (strain Ichinose-B95a)</name>
    <name type="common">MeV</name>
    <name type="synonym">Subacute sclerose panencephalitis virus</name>
    <dbReference type="NCBI Taxonomy" id="645098"/>
    <lineage>
        <taxon>Viruses</taxon>
        <taxon>Riboviria</taxon>
        <taxon>Orthornavirae</taxon>
        <taxon>Negarnaviricota</taxon>
        <taxon>Haploviricotina</taxon>
        <taxon>Monjiviricetes</taxon>
        <taxon>Mononegavirales</taxon>
        <taxon>Paramyxoviridae</taxon>
        <taxon>Orthoparamyxovirinae</taxon>
        <taxon>Morbillivirus</taxon>
        <taxon>Morbillivirus hominis</taxon>
        <taxon>Measles morbillivirus</taxon>
    </lineage>
</organism>
<comment type="function">
    <text evidence="2">Ribonucleocapsid-associated protein that interacts with the phosphoprotein (P), thereby increasing replication accuracy and processivity of the polymerase complex.</text>
</comment>
<comment type="subunit">
    <text evidence="2">Interacts with the phosphoprotein (via C-terminus); this interaction allows C to associate with the ribonucleocapsid.</text>
</comment>
<comment type="subcellular location">
    <subcellularLocation>
        <location evidence="2">Host nucleus</location>
    </subcellularLocation>
    <subcellularLocation>
        <location evidence="2">Host cytoplasmic vesicle</location>
    </subcellularLocation>
    <text evidence="2">Relocalizes from the nucleus to the inclusion bodies in the presence of P.</text>
</comment>
<comment type="similarity">
    <text evidence="3">Belongs to the morbillivirus protein C family.</text>
</comment>
<evidence type="ECO:0000256" key="1">
    <source>
        <dbReference type="SAM" id="MobiDB-lite"/>
    </source>
</evidence>
<evidence type="ECO:0000269" key="2">
    <source>
    </source>
</evidence>
<evidence type="ECO:0000305" key="3"/>
<accession>Q9YZN9</accession>
<keyword id="KW-1036">Host cytoplasmic vesicle</keyword>
<keyword id="KW-1048">Host nucleus</keyword>
<keyword id="KW-1185">Reference proteome</keyword>
<gene>
    <name type="primary">P/V/C</name>
</gene>